<comment type="function">
    <text evidence="1">Cell signaling peptide that may regulate plant stress, growth, and development. Mediates a rapid alkalinization of extracellular space by mediating a transient increase in the cytoplasmic Ca(2+) concentration leading to a calcium-dependent signaling events through a cell surface receptor and a concomitant activation of some intracellular mitogen-activated protein kinases (By similarity).</text>
</comment>
<comment type="subcellular location">
    <subcellularLocation>
        <location evidence="1">Secreted</location>
    </subcellularLocation>
</comment>
<comment type="similarity">
    <text evidence="3">Belongs to the plant rapid alkalinization factor (RALF) family.</text>
</comment>
<sequence>MKAWLICLLVICAAVIAEPVESRNYIEYGAINKCAGPNPPPGCNPPGAEQKNPTPVNEYSRGCSKIHRCRRD</sequence>
<accession>O64466</accession>
<feature type="signal peptide" evidence="2">
    <location>
        <begin position="1"/>
        <end position="17"/>
    </location>
</feature>
<feature type="chain" id="PRO_0000420302" description="Protein RALF-like 11">
    <location>
        <begin position="18"/>
        <end position="72"/>
    </location>
</feature>
<feature type="disulfide bond" evidence="1">
    <location>
        <begin position="34"/>
        <end position="43"/>
    </location>
</feature>
<feature type="disulfide bond" evidence="1">
    <location>
        <begin position="63"/>
        <end position="69"/>
    </location>
</feature>
<evidence type="ECO:0000250" key="1"/>
<evidence type="ECO:0000255" key="2"/>
<evidence type="ECO:0000305" key="3"/>
<name>RLF11_ARATH</name>
<reference key="1">
    <citation type="journal article" date="1999" name="Nature">
        <title>Sequence and analysis of chromosome 2 of the plant Arabidopsis thaliana.</title>
        <authorList>
            <person name="Lin X."/>
            <person name="Kaul S."/>
            <person name="Rounsley S.D."/>
            <person name="Shea T.P."/>
            <person name="Benito M.-I."/>
            <person name="Town C.D."/>
            <person name="Fujii C.Y."/>
            <person name="Mason T.M."/>
            <person name="Bowman C.L."/>
            <person name="Barnstead M.E."/>
            <person name="Feldblyum T.V."/>
            <person name="Buell C.R."/>
            <person name="Ketchum K.A."/>
            <person name="Lee J.J."/>
            <person name="Ronning C.M."/>
            <person name="Koo H.L."/>
            <person name="Moffat K.S."/>
            <person name="Cronin L.A."/>
            <person name="Shen M."/>
            <person name="Pai G."/>
            <person name="Van Aken S."/>
            <person name="Umayam L."/>
            <person name="Tallon L.J."/>
            <person name="Gill J.E."/>
            <person name="Adams M.D."/>
            <person name="Carrera A.J."/>
            <person name="Creasy T.H."/>
            <person name="Goodman H.M."/>
            <person name="Somerville C.R."/>
            <person name="Copenhaver G.P."/>
            <person name="Preuss D."/>
            <person name="Nierman W.C."/>
            <person name="White O."/>
            <person name="Eisen J.A."/>
            <person name="Salzberg S.L."/>
            <person name="Fraser C.M."/>
            <person name="Venter J.C."/>
        </authorList>
    </citation>
    <scope>NUCLEOTIDE SEQUENCE [LARGE SCALE GENOMIC DNA]</scope>
    <source>
        <strain>cv. Columbia</strain>
    </source>
</reference>
<reference key="2">
    <citation type="journal article" date="2017" name="Plant J.">
        <title>Araport11: a complete reannotation of the Arabidopsis thaliana reference genome.</title>
        <authorList>
            <person name="Cheng C.Y."/>
            <person name="Krishnakumar V."/>
            <person name="Chan A.P."/>
            <person name="Thibaud-Nissen F."/>
            <person name="Schobel S."/>
            <person name="Town C.D."/>
        </authorList>
    </citation>
    <scope>GENOME REANNOTATION</scope>
    <source>
        <strain>cv. Columbia</strain>
    </source>
</reference>
<reference key="3">
    <citation type="submission" date="2006-10" db="EMBL/GenBank/DDBJ databases">
        <title>Reconstruction of cDNA sequences for Arabidopsis genes from 5' and 3' RACE products.</title>
        <authorList>
            <person name="Underwood B.A."/>
            <person name="Xiao Y.-L."/>
            <person name="Moskal W.A. Jr."/>
            <person name="Monaghan E.L."/>
            <person name="Wang W."/>
            <person name="Redman J.C."/>
            <person name="Wu H.C."/>
            <person name="Utterback T."/>
            <person name="Town C.D."/>
        </authorList>
    </citation>
    <scope>NUCLEOTIDE SEQUENCE [LARGE SCALE MRNA] OF 10-72</scope>
    <source>
        <strain>cv. Columbia</strain>
    </source>
</reference>
<reference key="4">
    <citation type="journal article" date="2002" name="In Silico Biol.">
        <title>Peptomics, identification of novel cationic Arabidopsis peptides with conserved sequence motifs.</title>
        <authorList>
            <person name="Olsen A.N."/>
            <person name="Mundy J."/>
            <person name="Skriver K."/>
        </authorList>
    </citation>
    <scope>GENE FAMILY</scope>
    <scope>NOMENCLATURE</scope>
</reference>
<gene>
    <name type="primary">RALFL11</name>
    <name type="ordered locus">At2g19030</name>
    <name type="ORF">T20K24.4</name>
</gene>
<protein>
    <recommendedName>
        <fullName>Protein RALF-like 11</fullName>
    </recommendedName>
</protein>
<organism>
    <name type="scientific">Arabidopsis thaliana</name>
    <name type="common">Mouse-ear cress</name>
    <dbReference type="NCBI Taxonomy" id="3702"/>
    <lineage>
        <taxon>Eukaryota</taxon>
        <taxon>Viridiplantae</taxon>
        <taxon>Streptophyta</taxon>
        <taxon>Embryophyta</taxon>
        <taxon>Tracheophyta</taxon>
        <taxon>Spermatophyta</taxon>
        <taxon>Magnoliopsida</taxon>
        <taxon>eudicotyledons</taxon>
        <taxon>Gunneridae</taxon>
        <taxon>Pentapetalae</taxon>
        <taxon>rosids</taxon>
        <taxon>malvids</taxon>
        <taxon>Brassicales</taxon>
        <taxon>Brassicaceae</taxon>
        <taxon>Camelineae</taxon>
        <taxon>Arabidopsis</taxon>
    </lineage>
</organism>
<keyword id="KW-1015">Disulfide bond</keyword>
<keyword id="KW-0372">Hormone</keyword>
<keyword id="KW-1185">Reference proteome</keyword>
<keyword id="KW-0964">Secreted</keyword>
<keyword id="KW-0732">Signal</keyword>
<proteinExistence type="inferred from homology"/>
<dbReference type="EMBL" id="AC002392">
    <property type="protein sequence ID" value="AAD12021.1"/>
    <property type="molecule type" value="Genomic_DNA"/>
</dbReference>
<dbReference type="EMBL" id="CP002685">
    <property type="protein sequence ID" value="AEC06840.1"/>
    <property type="molecule type" value="Genomic_DNA"/>
</dbReference>
<dbReference type="EMBL" id="EG440707">
    <property type="status" value="NOT_ANNOTATED_CDS"/>
    <property type="molecule type" value="mRNA"/>
</dbReference>
<dbReference type="PIR" id="T00523">
    <property type="entry name" value="T00523"/>
</dbReference>
<dbReference type="RefSeq" id="NP_179493.1">
    <property type="nucleotide sequence ID" value="NM_127460.2"/>
</dbReference>
<dbReference type="SMR" id="O64466"/>
<dbReference type="STRING" id="3702.O64466"/>
<dbReference type="PaxDb" id="3702-AT2G19030.1"/>
<dbReference type="EnsemblPlants" id="AT2G19030.1">
    <property type="protein sequence ID" value="AT2G19030.1"/>
    <property type="gene ID" value="AT2G19030"/>
</dbReference>
<dbReference type="GeneID" id="816420"/>
<dbReference type="Gramene" id="AT2G19030.1">
    <property type="protein sequence ID" value="AT2G19030.1"/>
    <property type="gene ID" value="AT2G19030"/>
</dbReference>
<dbReference type="KEGG" id="ath:AT2G19030"/>
<dbReference type="Araport" id="AT2G19030"/>
<dbReference type="TAIR" id="AT2G19030">
    <property type="gene designation" value="RALFL11"/>
</dbReference>
<dbReference type="eggNOG" id="ENOG502SYWJ">
    <property type="taxonomic scope" value="Eukaryota"/>
</dbReference>
<dbReference type="HOGENOM" id="CLU_200725_0_0_1"/>
<dbReference type="InParanoid" id="O64466"/>
<dbReference type="OrthoDB" id="1096141at2759"/>
<dbReference type="PhylomeDB" id="O64466"/>
<dbReference type="PRO" id="PR:O64466"/>
<dbReference type="Proteomes" id="UP000006548">
    <property type="component" value="Chromosome 2"/>
</dbReference>
<dbReference type="ExpressionAtlas" id="O64466">
    <property type="expression patterns" value="baseline"/>
</dbReference>
<dbReference type="GO" id="GO:0000793">
    <property type="term" value="C:condensed chromosome"/>
    <property type="evidence" value="ECO:0000250"/>
    <property type="project" value="TAIR"/>
</dbReference>
<dbReference type="GO" id="GO:0005576">
    <property type="term" value="C:extracellular region"/>
    <property type="evidence" value="ECO:0007669"/>
    <property type="project" value="UniProtKB-SubCell"/>
</dbReference>
<dbReference type="GO" id="GO:0005179">
    <property type="term" value="F:hormone activity"/>
    <property type="evidence" value="ECO:0000250"/>
    <property type="project" value="UniProtKB"/>
</dbReference>
<dbReference type="GO" id="GO:0019722">
    <property type="term" value="P:calcium-mediated signaling"/>
    <property type="evidence" value="ECO:0000250"/>
    <property type="project" value="UniProtKB"/>
</dbReference>
<dbReference type="GO" id="GO:0007267">
    <property type="term" value="P:cell-cell signaling"/>
    <property type="evidence" value="ECO:0000250"/>
    <property type="project" value="TAIR"/>
</dbReference>
<dbReference type="GO" id="GO:0040008">
    <property type="term" value="P:regulation of growth"/>
    <property type="evidence" value="ECO:0007669"/>
    <property type="project" value="UniProtKB-ARBA"/>
</dbReference>
<dbReference type="InterPro" id="IPR008801">
    <property type="entry name" value="RALF"/>
</dbReference>
<dbReference type="PANTHER" id="PTHR34270:SF5">
    <property type="entry name" value="PROTEIN RALF-LIKE 10-RELATED"/>
    <property type="match status" value="1"/>
</dbReference>
<dbReference type="PANTHER" id="PTHR34270">
    <property type="entry name" value="PROTEIN RALF-LIKE 15-RELATED"/>
    <property type="match status" value="1"/>
</dbReference>
<dbReference type="Pfam" id="PF05498">
    <property type="entry name" value="RALF"/>
    <property type="match status" value="1"/>
</dbReference>